<keyword id="KW-0226">DNA condensation</keyword>
<keyword id="KW-0238">DNA-binding</keyword>
<keyword id="KW-1185">Reference proteome</keyword>
<dbReference type="EMBL" id="AE000511">
    <property type="protein sequence ID" value="AAD07885.1"/>
    <property type="molecule type" value="Genomic_DNA"/>
</dbReference>
<dbReference type="PIR" id="C64624">
    <property type="entry name" value="C64624"/>
</dbReference>
<dbReference type="RefSeq" id="NP_207628.1">
    <property type="nucleotide sequence ID" value="NC_000915.1"/>
</dbReference>
<dbReference type="RefSeq" id="WP_001029082.1">
    <property type="nucleotide sequence ID" value="NC_018939.1"/>
</dbReference>
<dbReference type="SMR" id="O25506"/>
<dbReference type="FunCoup" id="O25506">
    <property type="interactions" value="374"/>
</dbReference>
<dbReference type="IntAct" id="O25506">
    <property type="interactions" value="1"/>
</dbReference>
<dbReference type="STRING" id="85962.HP_0835"/>
<dbReference type="PaxDb" id="85962-C694_04280"/>
<dbReference type="EnsemblBacteria" id="AAD07885">
    <property type="protein sequence ID" value="AAD07885"/>
    <property type="gene ID" value="HP_0835"/>
</dbReference>
<dbReference type="KEGG" id="heo:C694_04280"/>
<dbReference type="KEGG" id="hpy:HP_0835"/>
<dbReference type="PATRIC" id="fig|85962.47.peg.890"/>
<dbReference type="eggNOG" id="COG0776">
    <property type="taxonomic scope" value="Bacteria"/>
</dbReference>
<dbReference type="InParanoid" id="O25506"/>
<dbReference type="OrthoDB" id="9799835at2"/>
<dbReference type="PhylomeDB" id="O25506"/>
<dbReference type="Proteomes" id="UP000000429">
    <property type="component" value="Chromosome"/>
</dbReference>
<dbReference type="GO" id="GO:0005829">
    <property type="term" value="C:cytosol"/>
    <property type="evidence" value="ECO:0000318"/>
    <property type="project" value="GO_Central"/>
</dbReference>
<dbReference type="GO" id="GO:0003677">
    <property type="term" value="F:DNA binding"/>
    <property type="evidence" value="ECO:0000318"/>
    <property type="project" value="GO_Central"/>
</dbReference>
<dbReference type="GO" id="GO:0030527">
    <property type="term" value="F:structural constituent of chromatin"/>
    <property type="evidence" value="ECO:0007669"/>
    <property type="project" value="InterPro"/>
</dbReference>
<dbReference type="GO" id="GO:0030261">
    <property type="term" value="P:chromosome condensation"/>
    <property type="evidence" value="ECO:0007669"/>
    <property type="project" value="UniProtKB-KW"/>
</dbReference>
<dbReference type="FunFam" id="4.10.520.10:FF:000014">
    <property type="entry name" value="DNA-binding protein HU"/>
    <property type="match status" value="1"/>
</dbReference>
<dbReference type="Gene3D" id="4.10.520.10">
    <property type="entry name" value="IHF-like DNA-binding proteins"/>
    <property type="match status" value="1"/>
</dbReference>
<dbReference type="InterPro" id="IPR000119">
    <property type="entry name" value="Hist_DNA-bd"/>
</dbReference>
<dbReference type="InterPro" id="IPR010992">
    <property type="entry name" value="IHF-like_DNA-bd_dom_sf"/>
</dbReference>
<dbReference type="PANTHER" id="PTHR33175">
    <property type="entry name" value="DNA-BINDING PROTEIN HU"/>
    <property type="match status" value="1"/>
</dbReference>
<dbReference type="PANTHER" id="PTHR33175:SF3">
    <property type="entry name" value="DNA-BINDING PROTEIN HU-BETA"/>
    <property type="match status" value="1"/>
</dbReference>
<dbReference type="Pfam" id="PF00216">
    <property type="entry name" value="Bac_DNA_binding"/>
    <property type="match status" value="1"/>
</dbReference>
<dbReference type="PRINTS" id="PR01727">
    <property type="entry name" value="DNABINDINGHU"/>
</dbReference>
<dbReference type="SMART" id="SM00411">
    <property type="entry name" value="BHL"/>
    <property type="match status" value="1"/>
</dbReference>
<dbReference type="SUPFAM" id="SSF47729">
    <property type="entry name" value="IHF-like DNA-binding proteins"/>
    <property type="match status" value="1"/>
</dbReference>
<name>DBH_HELPY</name>
<protein>
    <recommendedName>
        <fullName>DNA-binding protein HU</fullName>
    </recommendedName>
</protein>
<comment type="function">
    <text evidence="1">Histone-like DNA-binding protein which is capable of wrapping DNA to stabilize it, and thus to prevent its denaturation under extreme environmental conditions.</text>
</comment>
<comment type="subunit">
    <text evidence="1">Homodimer.</text>
</comment>
<comment type="similarity">
    <text evidence="3">Belongs to the bacterial histone-like protein family.</text>
</comment>
<sequence>MNKAEFIDLVKEAGKYNSKREAEEAISAFTLAVETALSKGESVELIGFGKFETAEQKGKEGKVPGSDKTYKTEDKRVPKFKPGKTLKQKVEEGK</sequence>
<reference key="1">
    <citation type="journal article" date="1997" name="Nature">
        <title>The complete genome sequence of the gastric pathogen Helicobacter pylori.</title>
        <authorList>
            <person name="Tomb J.-F."/>
            <person name="White O."/>
            <person name="Kerlavage A.R."/>
            <person name="Clayton R.A."/>
            <person name="Sutton G.G."/>
            <person name="Fleischmann R.D."/>
            <person name="Ketchum K.A."/>
            <person name="Klenk H.-P."/>
            <person name="Gill S.R."/>
            <person name="Dougherty B.A."/>
            <person name="Nelson K.E."/>
            <person name="Quackenbush J."/>
            <person name="Zhou L."/>
            <person name="Kirkness E.F."/>
            <person name="Peterson S.N."/>
            <person name="Loftus B.J."/>
            <person name="Richardson D.L."/>
            <person name="Dodson R.J."/>
            <person name="Khalak H.G."/>
            <person name="Glodek A."/>
            <person name="McKenney K."/>
            <person name="FitzGerald L.M."/>
            <person name="Lee N."/>
            <person name="Adams M.D."/>
            <person name="Hickey E.K."/>
            <person name="Berg D.E."/>
            <person name="Gocayne J.D."/>
            <person name="Utterback T.R."/>
            <person name="Peterson J.D."/>
            <person name="Kelley J.M."/>
            <person name="Cotton M.D."/>
            <person name="Weidman J.F."/>
            <person name="Fujii C."/>
            <person name="Bowman C."/>
            <person name="Watthey L."/>
            <person name="Wallin E."/>
            <person name="Hayes W.S."/>
            <person name="Borodovsky M."/>
            <person name="Karp P.D."/>
            <person name="Smith H.O."/>
            <person name="Fraser C.M."/>
            <person name="Venter J.C."/>
        </authorList>
    </citation>
    <scope>NUCLEOTIDE SEQUENCE [LARGE SCALE GENOMIC DNA]</scope>
    <source>
        <strain>ATCC 700392 / 26695</strain>
    </source>
</reference>
<evidence type="ECO:0000250" key="1"/>
<evidence type="ECO:0000256" key="2">
    <source>
        <dbReference type="SAM" id="MobiDB-lite"/>
    </source>
</evidence>
<evidence type="ECO:0000305" key="3"/>
<feature type="chain" id="PRO_0000104944" description="DNA-binding protein HU">
    <location>
        <begin position="1"/>
        <end position="94"/>
    </location>
</feature>
<feature type="region of interest" description="Disordered" evidence="2">
    <location>
        <begin position="56"/>
        <end position="94"/>
    </location>
</feature>
<feature type="compositionally biased region" description="Basic and acidic residues" evidence="2">
    <location>
        <begin position="68"/>
        <end position="77"/>
    </location>
</feature>
<feature type="compositionally biased region" description="Basic residues" evidence="2">
    <location>
        <begin position="78"/>
        <end position="87"/>
    </location>
</feature>
<gene>
    <name type="primary">hup</name>
    <name type="ordered locus">HP_0835</name>
</gene>
<proteinExistence type="inferred from homology"/>
<organism>
    <name type="scientific">Helicobacter pylori (strain ATCC 700392 / 26695)</name>
    <name type="common">Campylobacter pylori</name>
    <dbReference type="NCBI Taxonomy" id="85962"/>
    <lineage>
        <taxon>Bacteria</taxon>
        <taxon>Pseudomonadati</taxon>
        <taxon>Campylobacterota</taxon>
        <taxon>Epsilonproteobacteria</taxon>
        <taxon>Campylobacterales</taxon>
        <taxon>Helicobacteraceae</taxon>
        <taxon>Helicobacter</taxon>
    </lineage>
</organism>
<accession>O25506</accession>